<evidence type="ECO:0000255" key="1">
    <source>
        <dbReference type="HAMAP-Rule" id="MF_00046"/>
    </source>
</evidence>
<protein>
    <recommendedName>
        <fullName evidence="1">UDP-N-acetylmuramate--L-alanine ligase</fullName>
        <ecNumber evidence="1">6.3.2.8</ecNumber>
    </recommendedName>
    <alternativeName>
        <fullName evidence="1">UDP-N-acetylmuramoyl-L-alanine synthetase</fullName>
    </alternativeName>
</protein>
<reference key="1">
    <citation type="journal article" date="2008" name="Genome Res.">
        <title>Comparative genome analysis of Salmonella enteritidis PT4 and Salmonella gallinarum 287/91 provides insights into evolutionary and host adaptation pathways.</title>
        <authorList>
            <person name="Thomson N.R."/>
            <person name="Clayton D.J."/>
            <person name="Windhorst D."/>
            <person name="Vernikos G."/>
            <person name="Davidson S."/>
            <person name="Churcher C."/>
            <person name="Quail M.A."/>
            <person name="Stevens M."/>
            <person name="Jones M.A."/>
            <person name="Watson M."/>
            <person name="Barron A."/>
            <person name="Layton A."/>
            <person name="Pickard D."/>
            <person name="Kingsley R.A."/>
            <person name="Bignell A."/>
            <person name="Clark L."/>
            <person name="Harris B."/>
            <person name="Ormond D."/>
            <person name="Abdellah Z."/>
            <person name="Brooks K."/>
            <person name="Cherevach I."/>
            <person name="Chillingworth T."/>
            <person name="Woodward J."/>
            <person name="Norberczak H."/>
            <person name="Lord A."/>
            <person name="Arrowsmith C."/>
            <person name="Jagels K."/>
            <person name="Moule S."/>
            <person name="Mungall K."/>
            <person name="Saunders M."/>
            <person name="Whitehead S."/>
            <person name="Chabalgoity J.A."/>
            <person name="Maskell D."/>
            <person name="Humphreys T."/>
            <person name="Roberts M."/>
            <person name="Barrow P.A."/>
            <person name="Dougan G."/>
            <person name="Parkhill J."/>
        </authorList>
    </citation>
    <scope>NUCLEOTIDE SEQUENCE [LARGE SCALE GENOMIC DNA]</scope>
    <source>
        <strain>287/91 / NCTC 13346</strain>
    </source>
</reference>
<keyword id="KW-0067">ATP-binding</keyword>
<keyword id="KW-0131">Cell cycle</keyword>
<keyword id="KW-0132">Cell division</keyword>
<keyword id="KW-0133">Cell shape</keyword>
<keyword id="KW-0961">Cell wall biogenesis/degradation</keyword>
<keyword id="KW-0963">Cytoplasm</keyword>
<keyword id="KW-0436">Ligase</keyword>
<keyword id="KW-0547">Nucleotide-binding</keyword>
<keyword id="KW-0573">Peptidoglycan synthesis</keyword>
<organism>
    <name type="scientific">Salmonella gallinarum (strain 287/91 / NCTC 13346)</name>
    <dbReference type="NCBI Taxonomy" id="550538"/>
    <lineage>
        <taxon>Bacteria</taxon>
        <taxon>Pseudomonadati</taxon>
        <taxon>Pseudomonadota</taxon>
        <taxon>Gammaproteobacteria</taxon>
        <taxon>Enterobacterales</taxon>
        <taxon>Enterobacteriaceae</taxon>
        <taxon>Salmonella</taxon>
    </lineage>
</organism>
<dbReference type="EC" id="6.3.2.8" evidence="1"/>
<dbReference type="EMBL" id="AM933173">
    <property type="protein sequence ID" value="CAR36037.1"/>
    <property type="molecule type" value="Genomic_DNA"/>
</dbReference>
<dbReference type="RefSeq" id="WP_001096073.1">
    <property type="nucleotide sequence ID" value="NC_011274.1"/>
</dbReference>
<dbReference type="SMR" id="B5RH65"/>
<dbReference type="KEGG" id="seg:SG0130"/>
<dbReference type="HOGENOM" id="CLU_028104_2_2_6"/>
<dbReference type="UniPathway" id="UPA00219"/>
<dbReference type="Proteomes" id="UP000008321">
    <property type="component" value="Chromosome"/>
</dbReference>
<dbReference type="GO" id="GO:0005737">
    <property type="term" value="C:cytoplasm"/>
    <property type="evidence" value="ECO:0007669"/>
    <property type="project" value="UniProtKB-SubCell"/>
</dbReference>
<dbReference type="GO" id="GO:0005524">
    <property type="term" value="F:ATP binding"/>
    <property type="evidence" value="ECO:0007669"/>
    <property type="project" value="UniProtKB-UniRule"/>
</dbReference>
<dbReference type="GO" id="GO:0008763">
    <property type="term" value="F:UDP-N-acetylmuramate-L-alanine ligase activity"/>
    <property type="evidence" value="ECO:0007669"/>
    <property type="project" value="UniProtKB-UniRule"/>
</dbReference>
<dbReference type="GO" id="GO:0051301">
    <property type="term" value="P:cell division"/>
    <property type="evidence" value="ECO:0007669"/>
    <property type="project" value="UniProtKB-KW"/>
</dbReference>
<dbReference type="GO" id="GO:0071555">
    <property type="term" value="P:cell wall organization"/>
    <property type="evidence" value="ECO:0007669"/>
    <property type="project" value="UniProtKB-KW"/>
</dbReference>
<dbReference type="GO" id="GO:0009252">
    <property type="term" value="P:peptidoglycan biosynthetic process"/>
    <property type="evidence" value="ECO:0007669"/>
    <property type="project" value="UniProtKB-UniRule"/>
</dbReference>
<dbReference type="GO" id="GO:0008360">
    <property type="term" value="P:regulation of cell shape"/>
    <property type="evidence" value="ECO:0007669"/>
    <property type="project" value="UniProtKB-KW"/>
</dbReference>
<dbReference type="FunFam" id="3.40.1190.10:FF:000001">
    <property type="entry name" value="UDP-N-acetylmuramate--L-alanine ligase"/>
    <property type="match status" value="1"/>
</dbReference>
<dbReference type="FunFam" id="3.40.50.720:FF:000046">
    <property type="entry name" value="UDP-N-acetylmuramate--L-alanine ligase"/>
    <property type="match status" value="1"/>
</dbReference>
<dbReference type="FunFam" id="3.90.190.20:FF:000001">
    <property type="entry name" value="UDP-N-acetylmuramate--L-alanine ligase"/>
    <property type="match status" value="1"/>
</dbReference>
<dbReference type="Gene3D" id="3.90.190.20">
    <property type="entry name" value="Mur ligase, C-terminal domain"/>
    <property type="match status" value="1"/>
</dbReference>
<dbReference type="Gene3D" id="3.40.1190.10">
    <property type="entry name" value="Mur-like, catalytic domain"/>
    <property type="match status" value="1"/>
</dbReference>
<dbReference type="Gene3D" id="3.40.50.720">
    <property type="entry name" value="NAD(P)-binding Rossmann-like Domain"/>
    <property type="match status" value="1"/>
</dbReference>
<dbReference type="HAMAP" id="MF_00046">
    <property type="entry name" value="MurC"/>
    <property type="match status" value="1"/>
</dbReference>
<dbReference type="InterPro" id="IPR036565">
    <property type="entry name" value="Mur-like_cat_sf"/>
</dbReference>
<dbReference type="InterPro" id="IPR004101">
    <property type="entry name" value="Mur_ligase_C"/>
</dbReference>
<dbReference type="InterPro" id="IPR036615">
    <property type="entry name" value="Mur_ligase_C_dom_sf"/>
</dbReference>
<dbReference type="InterPro" id="IPR013221">
    <property type="entry name" value="Mur_ligase_cen"/>
</dbReference>
<dbReference type="InterPro" id="IPR000713">
    <property type="entry name" value="Mur_ligase_N"/>
</dbReference>
<dbReference type="InterPro" id="IPR050061">
    <property type="entry name" value="MurCDEF_pg_biosynth"/>
</dbReference>
<dbReference type="InterPro" id="IPR005758">
    <property type="entry name" value="UDP-N-AcMur_Ala_ligase_MurC"/>
</dbReference>
<dbReference type="NCBIfam" id="TIGR01082">
    <property type="entry name" value="murC"/>
    <property type="match status" value="1"/>
</dbReference>
<dbReference type="PANTHER" id="PTHR43445:SF3">
    <property type="entry name" value="UDP-N-ACETYLMURAMATE--L-ALANINE LIGASE"/>
    <property type="match status" value="1"/>
</dbReference>
<dbReference type="PANTHER" id="PTHR43445">
    <property type="entry name" value="UDP-N-ACETYLMURAMATE--L-ALANINE LIGASE-RELATED"/>
    <property type="match status" value="1"/>
</dbReference>
<dbReference type="Pfam" id="PF01225">
    <property type="entry name" value="Mur_ligase"/>
    <property type="match status" value="1"/>
</dbReference>
<dbReference type="Pfam" id="PF02875">
    <property type="entry name" value="Mur_ligase_C"/>
    <property type="match status" value="1"/>
</dbReference>
<dbReference type="Pfam" id="PF08245">
    <property type="entry name" value="Mur_ligase_M"/>
    <property type="match status" value="1"/>
</dbReference>
<dbReference type="SUPFAM" id="SSF51984">
    <property type="entry name" value="MurCD N-terminal domain"/>
    <property type="match status" value="1"/>
</dbReference>
<dbReference type="SUPFAM" id="SSF53623">
    <property type="entry name" value="MurD-like peptide ligases, catalytic domain"/>
    <property type="match status" value="1"/>
</dbReference>
<dbReference type="SUPFAM" id="SSF53244">
    <property type="entry name" value="MurD-like peptide ligases, peptide-binding domain"/>
    <property type="match status" value="1"/>
</dbReference>
<sequence length="491" mass="53470">MNTQQLAKLRSIVPEMRRVRHIHFVGIGGAGMGGIAEVLANEGYQISGSDLAPNPVTQQLTSLGATIFFNHRPENVRDASVVVVSSAISADNPEIVAAHEARIPVIRRAEMLAELMRFRHGIAIAGTHGKTTTTAMVSSIYAEAGLDPTFVNGGLVKAAGVHARLGHSRYLIAEADESDASFLHLQPMVAIVTNIEADHMDTYHGDFENLKQTFINFLHNLPFYGRAVMCVDDPVIRELLPRVGRQTTTYGFSEDADVRVEDYQQIGPQGHFTLLRQGMPDLHVTLNAPGRHNALNAAAAVAVATEEGIDDDAILRALESFQGTGRRFDFLGEFPLEPVNGKAGTAMLVDDYGHHPTEVDATIKAARAGWPDKNLVMLFQPHRYTRTRDLYDDFANVLTQVDALLMLDVYPAGEAPTPGADSRSLCRTIRNRGKIDPILVSDPAQVATMLAPVLTGNDLILVQGAGNVGKIARYLSEIKLKPQIQEEEQHG</sequence>
<comment type="function">
    <text evidence="1">Cell wall formation.</text>
</comment>
<comment type="catalytic activity">
    <reaction evidence="1">
        <text>UDP-N-acetyl-alpha-D-muramate + L-alanine + ATP = UDP-N-acetyl-alpha-D-muramoyl-L-alanine + ADP + phosphate + H(+)</text>
        <dbReference type="Rhea" id="RHEA:23372"/>
        <dbReference type="ChEBI" id="CHEBI:15378"/>
        <dbReference type="ChEBI" id="CHEBI:30616"/>
        <dbReference type="ChEBI" id="CHEBI:43474"/>
        <dbReference type="ChEBI" id="CHEBI:57972"/>
        <dbReference type="ChEBI" id="CHEBI:70757"/>
        <dbReference type="ChEBI" id="CHEBI:83898"/>
        <dbReference type="ChEBI" id="CHEBI:456216"/>
        <dbReference type="EC" id="6.3.2.8"/>
    </reaction>
</comment>
<comment type="pathway">
    <text evidence="1">Cell wall biogenesis; peptidoglycan biosynthesis.</text>
</comment>
<comment type="subcellular location">
    <subcellularLocation>
        <location evidence="1">Cytoplasm</location>
    </subcellularLocation>
</comment>
<comment type="similarity">
    <text evidence="1">Belongs to the MurCDEF family.</text>
</comment>
<name>MURC_SALG2</name>
<feature type="chain" id="PRO_1000091131" description="UDP-N-acetylmuramate--L-alanine ligase">
    <location>
        <begin position="1"/>
        <end position="491"/>
    </location>
</feature>
<feature type="binding site" evidence="1">
    <location>
        <begin position="126"/>
        <end position="132"/>
    </location>
    <ligand>
        <name>ATP</name>
        <dbReference type="ChEBI" id="CHEBI:30616"/>
    </ligand>
</feature>
<accession>B5RH65</accession>
<proteinExistence type="inferred from homology"/>
<gene>
    <name evidence="1" type="primary">murC</name>
    <name type="ordered locus">SG0130</name>
</gene>